<sequence>MAEKNKKEHPVTKDRLHPRNKHRERYDFDALIATTPELAQYVTLNIYNDQSIDFFNPAAVLCLNQALLKHYYGIDEWNIPEGYLCPPIPGRADYIHNIAALLGTSANDVIPVGPAIKCLDIGVGANCVYPIIGNNEYGWSFVGADVDPVSVASAKNIVDKNKVLQGNVEIRLQNHPLDIFYGIIGEGERFDVTICNPPFHASAEDAAAGTLRKLSNLQHKKVTKANLNFGGQHNELWCEGGESAFVREMILESKKFAASCLWFSTLISKQTNLQKAYDQLEVLAPFDVRTIPMGQGNKSSRLIAWTFQSKEAQAKWVSARWK</sequence>
<comment type="function">
    <text evidence="1">Specifically methylates the adenine in position 1618 of 23S rRNA.</text>
</comment>
<comment type="catalytic activity">
    <reaction evidence="1">
        <text>adenosine(1618) in 23S rRNA + S-adenosyl-L-methionine = N(6)-methyladenosine(1618) in 23S rRNA + S-adenosyl-L-homocysteine + H(+)</text>
        <dbReference type="Rhea" id="RHEA:16497"/>
        <dbReference type="Rhea" id="RHEA-COMP:10229"/>
        <dbReference type="Rhea" id="RHEA-COMP:10231"/>
        <dbReference type="ChEBI" id="CHEBI:15378"/>
        <dbReference type="ChEBI" id="CHEBI:57856"/>
        <dbReference type="ChEBI" id="CHEBI:59789"/>
        <dbReference type="ChEBI" id="CHEBI:74411"/>
        <dbReference type="ChEBI" id="CHEBI:74449"/>
        <dbReference type="EC" id="2.1.1.181"/>
    </reaction>
</comment>
<comment type="subcellular location">
    <subcellularLocation>
        <location evidence="1">Cytoplasm</location>
    </subcellularLocation>
</comment>
<comment type="similarity">
    <text evidence="1">Belongs to the methyltransferase superfamily. METTL16/RlmF family.</text>
</comment>
<protein>
    <recommendedName>
        <fullName evidence="1">Ribosomal RNA large subunit methyltransferase F</fullName>
        <ecNumber evidence="1">2.1.1.181</ecNumber>
    </recommendedName>
    <alternativeName>
        <fullName evidence="1">23S rRNA mA1618 methyltransferase</fullName>
    </alternativeName>
    <alternativeName>
        <fullName evidence="1">rRNA adenine N-6-methyltransferase</fullName>
    </alternativeName>
</protein>
<dbReference type="EC" id="2.1.1.181" evidence="1"/>
<dbReference type="EMBL" id="CP000383">
    <property type="protein sequence ID" value="ABG57957.1"/>
    <property type="molecule type" value="Genomic_DNA"/>
</dbReference>
<dbReference type="RefSeq" id="WP_011584073.1">
    <property type="nucleotide sequence ID" value="NC_008255.1"/>
</dbReference>
<dbReference type="SMR" id="Q11XA9"/>
<dbReference type="STRING" id="269798.CHU_0670"/>
<dbReference type="KEGG" id="chu:CHU_0670"/>
<dbReference type="eggNOG" id="COG3129">
    <property type="taxonomic scope" value="Bacteria"/>
</dbReference>
<dbReference type="HOGENOM" id="CLU_027534_3_0_10"/>
<dbReference type="OrthoDB" id="1115728at2"/>
<dbReference type="Proteomes" id="UP000001822">
    <property type="component" value="Chromosome"/>
</dbReference>
<dbReference type="GO" id="GO:0005737">
    <property type="term" value="C:cytoplasm"/>
    <property type="evidence" value="ECO:0007669"/>
    <property type="project" value="UniProtKB-SubCell"/>
</dbReference>
<dbReference type="GO" id="GO:0052907">
    <property type="term" value="F:23S rRNA (adenine(1618)-N(6))-methyltransferase activity"/>
    <property type="evidence" value="ECO:0007669"/>
    <property type="project" value="UniProtKB-EC"/>
</dbReference>
<dbReference type="GO" id="GO:0070475">
    <property type="term" value="P:rRNA base methylation"/>
    <property type="evidence" value="ECO:0007669"/>
    <property type="project" value="TreeGrafter"/>
</dbReference>
<dbReference type="CDD" id="cd02440">
    <property type="entry name" value="AdoMet_MTases"/>
    <property type="match status" value="1"/>
</dbReference>
<dbReference type="Gene3D" id="3.40.50.150">
    <property type="entry name" value="Vaccinia Virus protein VP39"/>
    <property type="match status" value="1"/>
</dbReference>
<dbReference type="HAMAP" id="MF_01848">
    <property type="entry name" value="23SrRNA_methyltr_F"/>
    <property type="match status" value="1"/>
</dbReference>
<dbReference type="InterPro" id="IPR010286">
    <property type="entry name" value="METTL16/RlmF"/>
</dbReference>
<dbReference type="InterPro" id="IPR016909">
    <property type="entry name" value="rRNA_lsu_MeTfrase_F"/>
</dbReference>
<dbReference type="InterPro" id="IPR029063">
    <property type="entry name" value="SAM-dependent_MTases_sf"/>
</dbReference>
<dbReference type="NCBIfam" id="NF008725">
    <property type="entry name" value="PRK11727.1"/>
    <property type="match status" value="1"/>
</dbReference>
<dbReference type="PANTHER" id="PTHR13393:SF0">
    <property type="entry name" value="RNA N6-ADENOSINE-METHYLTRANSFERASE METTL16"/>
    <property type="match status" value="1"/>
</dbReference>
<dbReference type="PANTHER" id="PTHR13393">
    <property type="entry name" value="SAM-DEPENDENT METHYLTRANSFERASE"/>
    <property type="match status" value="1"/>
</dbReference>
<dbReference type="Pfam" id="PF05971">
    <property type="entry name" value="Methyltransf_10"/>
    <property type="match status" value="1"/>
</dbReference>
<dbReference type="PIRSF" id="PIRSF029038">
    <property type="entry name" value="Mtase_YbiN_prd"/>
    <property type="match status" value="1"/>
</dbReference>
<dbReference type="SUPFAM" id="SSF53335">
    <property type="entry name" value="S-adenosyl-L-methionine-dependent methyltransferases"/>
    <property type="match status" value="1"/>
</dbReference>
<accession>Q11XA9</accession>
<reference key="1">
    <citation type="journal article" date="2007" name="Appl. Environ. Microbiol.">
        <title>Genome sequence of the cellulolytic gliding bacterium Cytophaga hutchinsonii.</title>
        <authorList>
            <person name="Xie G."/>
            <person name="Bruce D.C."/>
            <person name="Challacombe J.F."/>
            <person name="Chertkov O."/>
            <person name="Detter J.C."/>
            <person name="Gilna P."/>
            <person name="Han C.S."/>
            <person name="Lucas S."/>
            <person name="Misra M."/>
            <person name="Myers G.L."/>
            <person name="Richardson P."/>
            <person name="Tapia R."/>
            <person name="Thayer N."/>
            <person name="Thompson L.S."/>
            <person name="Brettin T.S."/>
            <person name="Henrissat B."/>
            <person name="Wilson D.B."/>
            <person name="McBride M.J."/>
        </authorList>
    </citation>
    <scope>NUCLEOTIDE SEQUENCE [LARGE SCALE GENOMIC DNA]</scope>
    <source>
        <strain>ATCC 33406 / DSM 1761 / JCM 20678 / CIP 103989 / IAM 12607 / NBRC 15051 / NCIMB 9469 / D465</strain>
    </source>
</reference>
<organism>
    <name type="scientific">Cytophaga hutchinsonii (strain ATCC 33406 / DSM 1761 / CIP 103989 / NBRC 15051 / NCIMB 9469 / D465)</name>
    <dbReference type="NCBI Taxonomy" id="269798"/>
    <lineage>
        <taxon>Bacteria</taxon>
        <taxon>Pseudomonadati</taxon>
        <taxon>Bacteroidota</taxon>
        <taxon>Cytophagia</taxon>
        <taxon>Cytophagales</taxon>
        <taxon>Cytophagaceae</taxon>
        <taxon>Cytophaga</taxon>
    </lineage>
</organism>
<proteinExistence type="inferred from homology"/>
<gene>
    <name evidence="1" type="primary">rlmF</name>
    <name type="ordered locus">CHU_0670</name>
</gene>
<keyword id="KW-0963">Cytoplasm</keyword>
<keyword id="KW-0489">Methyltransferase</keyword>
<keyword id="KW-1185">Reference proteome</keyword>
<keyword id="KW-0698">rRNA processing</keyword>
<keyword id="KW-0949">S-adenosyl-L-methionine</keyword>
<keyword id="KW-0808">Transferase</keyword>
<name>RLMF_CYTH3</name>
<feature type="chain" id="PRO_0000349900" description="Ribosomal RNA large subunit methyltransferase F">
    <location>
        <begin position="1"/>
        <end position="322"/>
    </location>
</feature>
<evidence type="ECO:0000255" key="1">
    <source>
        <dbReference type="HAMAP-Rule" id="MF_01848"/>
    </source>
</evidence>